<reference key="1">
    <citation type="journal article" date="1996" name="Yeast">
        <title>Sequence analysis of the CEN12 region of Saccharomyces cerevisiae on a 43.7 kb fragment of chromosome XII including an open reading frame homologous to the human cystic fibrosis transmembrane conductance regulator protein CFTR.</title>
        <authorList>
            <person name="Miosga T."/>
            <person name="Zimmermann F.K."/>
        </authorList>
    </citation>
    <scope>NUCLEOTIDE SEQUENCE [LARGE SCALE GENOMIC DNA]</scope>
    <scope>IDENTIFICATION OF FRAMESHIFT</scope>
    <source>
        <strain>ATCC 90840 / EAY235 / FY23</strain>
    </source>
</reference>
<reference key="2">
    <citation type="journal article" date="1997" name="Yeast">
        <title>The sequence of 32kb on the left arm of yeast chromosome XII reveals six known genes, a new member of the seripauperins family and a new ABC transporter homologous to the human multidrug resistance protein.</title>
        <authorList>
            <person name="Purnelle B."/>
            <person name="Goffeau A."/>
        </authorList>
    </citation>
    <scope>NUCLEOTIDE SEQUENCE [LARGE SCALE GENOMIC DNA]</scope>
    <source>
        <strain>ATCC 204508 / S288c</strain>
    </source>
</reference>
<reference key="3">
    <citation type="journal article" date="1997" name="Nature">
        <title>The nucleotide sequence of Saccharomyces cerevisiae chromosome XII.</title>
        <authorList>
            <person name="Johnston M."/>
            <person name="Hillier L.W."/>
            <person name="Riles L."/>
            <person name="Albermann K."/>
            <person name="Andre B."/>
            <person name="Ansorge W."/>
            <person name="Benes V."/>
            <person name="Brueckner M."/>
            <person name="Delius H."/>
            <person name="Dubois E."/>
            <person name="Duesterhoeft A."/>
            <person name="Entian K.-D."/>
            <person name="Floeth M."/>
            <person name="Goffeau A."/>
            <person name="Hebling U."/>
            <person name="Heumann K."/>
            <person name="Heuss-Neitzel D."/>
            <person name="Hilbert H."/>
            <person name="Hilger F."/>
            <person name="Kleine K."/>
            <person name="Koetter P."/>
            <person name="Louis E.J."/>
            <person name="Messenguy F."/>
            <person name="Mewes H.-W."/>
            <person name="Miosga T."/>
            <person name="Moestl D."/>
            <person name="Mueller-Auer S."/>
            <person name="Nentwich U."/>
            <person name="Obermaier B."/>
            <person name="Piravandi E."/>
            <person name="Pohl T.M."/>
            <person name="Portetelle D."/>
            <person name="Purnelle B."/>
            <person name="Rechmann S."/>
            <person name="Rieger M."/>
            <person name="Rinke M."/>
            <person name="Rose M."/>
            <person name="Scharfe M."/>
            <person name="Scherens B."/>
            <person name="Scholler P."/>
            <person name="Schwager C."/>
            <person name="Schwarz S."/>
            <person name="Underwood A.P."/>
            <person name="Urrestarazu L.A."/>
            <person name="Vandenbol M."/>
            <person name="Verhasselt P."/>
            <person name="Vierendeels F."/>
            <person name="Voet M."/>
            <person name="Volckaert G."/>
            <person name="Voss H."/>
            <person name="Wambutt R."/>
            <person name="Wedler E."/>
            <person name="Wedler H."/>
            <person name="Zimmermann F.K."/>
            <person name="Zollner A."/>
            <person name="Hani J."/>
            <person name="Hoheisel J.D."/>
        </authorList>
    </citation>
    <scope>NUCLEOTIDE SEQUENCE [LARGE SCALE GENOMIC DNA]</scope>
    <source>
        <strain>ATCC 204508 / S288c</strain>
    </source>
</reference>
<reference key="4">
    <citation type="journal article" date="2014" name="G3 (Bethesda)">
        <title>The reference genome sequence of Saccharomyces cerevisiae: Then and now.</title>
        <authorList>
            <person name="Engel S.R."/>
            <person name="Dietrich F.S."/>
            <person name="Fisk D.G."/>
            <person name="Binkley G."/>
            <person name="Balakrishnan R."/>
            <person name="Costanzo M.C."/>
            <person name="Dwight S.S."/>
            <person name="Hitz B.C."/>
            <person name="Karra K."/>
            <person name="Nash R.S."/>
            <person name="Weng S."/>
            <person name="Wong E.D."/>
            <person name="Lloyd P."/>
            <person name="Skrzypek M.S."/>
            <person name="Miyasato S.R."/>
            <person name="Simison M."/>
            <person name="Cherry J.M."/>
        </authorList>
    </citation>
    <scope>GENOME REANNOTATION</scope>
    <source>
        <strain>ATCC 204508 / S288c</strain>
    </source>
</reference>
<name>YL016_YEAST</name>
<gene>
    <name type="primary">SDC25</name>
    <name type="synonym">SCD25</name>
    <name type="ordered locus">YLL016W</name>
    <name type="ORF">L1309</name>
</gene>
<sequence>MPITSSPDLFYLNDCDVVYWYDLTRLVCHYVNLTERDLLANEREKFLTSLDLLTAQITYVYMLFRNLRLVEDSFKKTLKKLIYTLSRFSINANIWFHSTLFEEREAIASQKDPERRSPLLQSILGTFQKFHFLLRLLHFLSNPNELTILPQLTPRFFKDSFNTISWNNPFLRKRLNQHMSHDLPRQMIKAVAGASGIVAENIDEIPASKQGTSCSSETSHHSPSAPFQRRRRGTIFSNVSGSSDESDTIWSKRKKPYPLNEETLSLVRARKKQLDGKLKQMIKSANEYLSNTANFSKMLNFEMNFKTYEEVSGTIPIIDILENLDLTIFLNLRELGDENRVFDEDVAIDDEDEEFLKHSLSSLSYILSDYFNMKQYFHDVVVKFIIVAQHLTLEDPFVFSPMQNDLPTGYYEPMKPSSLNLDNAKDKKNGSQNTDIQEEEDEYEPDPDSLILFHNLINQDSDFNDLKFFNLAHVFKKSCDDYFDVLKLAIEFVNQLILERENLLNYAARMMKNNITELLLRGEEGYGSYDGGETAEKSDTNAVYADSDTKDNDEWRDSQVKLPRYLQREYDSELIWGSNNRIKGGSKHALISYLTDNEKKDLFFDITFLITFRSIFTTTEFLSYLISQYNLDPPEDLCFEEYNEWVTKKLIPVKCRVVEIMTTFFKQYWFLGYDEPDLATLNLDYFAQVAIKENITGSVELLKEVNQKFKHGNIQEATAPMKTLDQQICQDHYSGTLYSTTESILAVDPVLFATQLTILEHEIYCEITIFDCLQKIWKNKYTKSYGASPGLNEFISFANKLTNFISYSVVKEADKSKRAKLLSHFIFIAEYCRKFNNFSSMTAIISALYSSPIYRLEKTWQAVIPQTRDLLQSLNKLMDPKKNFINYRNELKSLHSAPCVPFFGVYLSDLTFTDSGNPDYLVLEHGLKGVHDEKKYINFNKRSRLVDILQEIIYFKKTHYDFTKDRTVIECISNSLENIPHIEKQYQLSLIIEPKPRKKVVPNSNSNNKSQEKSRDDQTDEGKTSTKKDRFPKFQLHKTKKKAPKVSK</sequence>
<feature type="chain" id="PRO_0000393436" description="Putative truncated guanine nucleotide exchange factor SDC25">
    <location>
        <begin position="1"/>
        <end position="1048"/>
    </location>
</feature>
<feature type="domain" description="N-terminal Ras-GEF" evidence="2">
    <location>
        <begin position="578"/>
        <end position="710"/>
    </location>
</feature>
<feature type="domain" description="Ras-GEF" evidence="3">
    <location>
        <begin position="748"/>
        <end position="995"/>
    </location>
</feature>
<feature type="region of interest" description="Disordered" evidence="4">
    <location>
        <begin position="208"/>
        <end position="242"/>
    </location>
</feature>
<feature type="region of interest" description="Disordered" evidence="4">
    <location>
        <begin position="419"/>
        <end position="444"/>
    </location>
</feature>
<feature type="region of interest" description="Disordered" evidence="4">
    <location>
        <begin position="997"/>
        <end position="1048"/>
    </location>
</feature>
<feature type="compositionally biased region" description="Low complexity" evidence="4">
    <location>
        <begin position="212"/>
        <end position="224"/>
    </location>
</feature>
<feature type="compositionally biased region" description="Basic and acidic residues" evidence="4">
    <location>
        <begin position="1010"/>
        <end position="1032"/>
    </location>
</feature>
<feature type="compositionally biased region" description="Basic residues" evidence="4">
    <location>
        <begin position="1035"/>
        <end position="1048"/>
    </location>
</feature>
<organism>
    <name type="scientific">Saccharomyces cerevisiae (strain ATCC 204508 / S288c)</name>
    <name type="common">Baker's yeast</name>
    <dbReference type="NCBI Taxonomy" id="559292"/>
    <lineage>
        <taxon>Eukaryota</taxon>
        <taxon>Fungi</taxon>
        <taxon>Dikarya</taxon>
        <taxon>Ascomycota</taxon>
        <taxon>Saccharomycotina</taxon>
        <taxon>Saccharomycetes</taxon>
        <taxon>Saccharomycetales</taxon>
        <taxon>Saccharomycetaceae</taxon>
        <taxon>Saccharomyces</taxon>
    </lineage>
</organism>
<comment type="function">
    <text evidence="1">Promotes the exchange of Ras-bound GDP by GTP.</text>
</comment>
<comment type="interaction">
    <interactant intactId="EBI-6315249">
        <id>P0CF34</id>
    </interactant>
    <interactant intactId="EBI-37047">
        <id>Q06604</id>
        <label>BSP1</label>
    </interactant>
    <organismsDiffer>false</organismsDiffer>
    <experiments>2</experiments>
</comment>
<comment type="caution">
    <text evidence="5 6">Could be the product of a pseudogene unlikely to encode a functional protein. This is the C-terminal part of guanine nucleotide exchange factor SDC25. Strain S288c has a frameshift in position 92, which disrupts the gene coding for this protein and produces two ORFs YLL016W and YLL017W. Because of that it is not part of the S.cerevisiae S288c complete/reference proteome set. A contiguous sequence for SDC25 can be found in strain W303 (AC P0CF32).</text>
</comment>
<evidence type="ECO:0000250" key="1"/>
<evidence type="ECO:0000255" key="2">
    <source>
        <dbReference type="PROSITE-ProRule" id="PRU00135"/>
    </source>
</evidence>
<evidence type="ECO:0000255" key="3">
    <source>
        <dbReference type="PROSITE-ProRule" id="PRU00168"/>
    </source>
</evidence>
<evidence type="ECO:0000256" key="4">
    <source>
        <dbReference type="SAM" id="MobiDB-lite"/>
    </source>
</evidence>
<evidence type="ECO:0000305" key="5">
    <source>
    </source>
</evidence>
<evidence type="ECO:0000305" key="6">
    <source>
    </source>
</evidence>
<accession>P0CF34</accession>
<accession>P14771</accession>
<accession>Q12037</accession>
<accession>Q12065</accession>
<accession>Q6B0T5</accession>
<accession>Q6WV04</accession>
<protein>
    <recommendedName>
        <fullName>Putative truncated guanine nucleotide exchange factor SDC25</fullName>
    </recommendedName>
</protein>
<proteinExistence type="uncertain"/>
<keyword id="KW-0131">Cell cycle</keyword>
<keyword id="KW-0132">Cell division</keyword>
<keyword id="KW-0344">Guanine-nucleotide releasing factor</keyword>
<dbReference type="EMBL" id="X91488">
    <property type="protein sequence ID" value="CAA62775.1"/>
    <property type="molecule type" value="Genomic_DNA"/>
</dbReference>
<dbReference type="EMBL" id="X97560">
    <property type="protein sequence ID" value="CAA66161.1"/>
    <property type="molecule type" value="Genomic_DNA"/>
</dbReference>
<dbReference type="EMBL" id="Z73121">
    <property type="protein sequence ID" value="CAA97461.1"/>
    <property type="molecule type" value="Genomic_DNA"/>
</dbReference>
<dbReference type="PIR" id="S64758">
    <property type="entry name" value="S64758"/>
</dbReference>
<dbReference type="SMR" id="P0CF34"/>
<dbReference type="IntAct" id="P0CF34">
    <property type="interactions" value="21"/>
</dbReference>
<dbReference type="MINT" id="P0CF34"/>
<dbReference type="AGR" id="SGD:S000003939"/>
<dbReference type="SGD" id="S000003939">
    <property type="gene designation" value="SDC25"/>
</dbReference>
<dbReference type="GO" id="GO:0005085">
    <property type="term" value="F:guanyl-nucleotide exchange factor activity"/>
    <property type="evidence" value="ECO:0007669"/>
    <property type="project" value="UniProtKB-KW"/>
</dbReference>
<dbReference type="GO" id="GO:0051301">
    <property type="term" value="P:cell division"/>
    <property type="evidence" value="ECO:0007669"/>
    <property type="project" value="UniProtKB-KW"/>
</dbReference>
<dbReference type="GO" id="GO:0007264">
    <property type="term" value="P:small GTPase-mediated signal transduction"/>
    <property type="evidence" value="ECO:0007669"/>
    <property type="project" value="InterPro"/>
</dbReference>
<dbReference type="CDD" id="cd00155">
    <property type="entry name" value="RasGEF"/>
    <property type="match status" value="1"/>
</dbReference>
<dbReference type="CDD" id="cd06224">
    <property type="entry name" value="REM"/>
    <property type="match status" value="1"/>
</dbReference>
<dbReference type="Gene3D" id="1.10.840.10">
    <property type="entry name" value="Ras guanine-nucleotide exchange factors catalytic domain"/>
    <property type="match status" value="1"/>
</dbReference>
<dbReference type="Gene3D" id="1.20.870.10">
    <property type="entry name" value="Son of sevenless (SoS) protein Chain: S domain 1"/>
    <property type="match status" value="1"/>
</dbReference>
<dbReference type="InterPro" id="IPR008937">
    <property type="entry name" value="Ras-like_GEF"/>
</dbReference>
<dbReference type="InterPro" id="IPR000651">
    <property type="entry name" value="Ras-like_Gua-exchang_fac_N"/>
</dbReference>
<dbReference type="InterPro" id="IPR019804">
    <property type="entry name" value="Ras_G-nucl-exch_fac_CS"/>
</dbReference>
<dbReference type="InterPro" id="IPR023578">
    <property type="entry name" value="Ras_GEF_dom_sf"/>
</dbReference>
<dbReference type="InterPro" id="IPR001895">
    <property type="entry name" value="RASGEF_cat_dom"/>
</dbReference>
<dbReference type="InterPro" id="IPR036964">
    <property type="entry name" value="RASGEF_cat_dom_sf"/>
</dbReference>
<dbReference type="PANTHER" id="PTHR23113:SF368">
    <property type="entry name" value="CELL DIVISION CONTROL PROTEIN 25"/>
    <property type="match status" value="1"/>
</dbReference>
<dbReference type="PANTHER" id="PTHR23113">
    <property type="entry name" value="GUANINE NUCLEOTIDE EXCHANGE FACTOR"/>
    <property type="match status" value="1"/>
</dbReference>
<dbReference type="Pfam" id="PF00617">
    <property type="entry name" value="RasGEF"/>
    <property type="match status" value="1"/>
</dbReference>
<dbReference type="Pfam" id="PF00618">
    <property type="entry name" value="RasGEF_N"/>
    <property type="match status" value="1"/>
</dbReference>
<dbReference type="SMART" id="SM00147">
    <property type="entry name" value="RasGEF"/>
    <property type="match status" value="1"/>
</dbReference>
<dbReference type="SMART" id="SM00229">
    <property type="entry name" value="RasGEFN"/>
    <property type="match status" value="1"/>
</dbReference>
<dbReference type="SUPFAM" id="SSF48366">
    <property type="entry name" value="Ras GEF"/>
    <property type="match status" value="1"/>
</dbReference>
<dbReference type="PROSITE" id="PS00720">
    <property type="entry name" value="RASGEF"/>
    <property type="match status" value="1"/>
</dbReference>
<dbReference type="PROSITE" id="PS50009">
    <property type="entry name" value="RASGEF_CAT"/>
    <property type="match status" value="1"/>
</dbReference>
<dbReference type="PROSITE" id="PS50212">
    <property type="entry name" value="RASGEF_NTER"/>
    <property type="match status" value="1"/>
</dbReference>